<organism>
    <name type="scientific">Rhodococcus jostii (strain RHA1)</name>
    <dbReference type="NCBI Taxonomy" id="101510"/>
    <lineage>
        <taxon>Bacteria</taxon>
        <taxon>Bacillati</taxon>
        <taxon>Actinomycetota</taxon>
        <taxon>Actinomycetes</taxon>
        <taxon>Mycobacteriales</taxon>
        <taxon>Nocardiaceae</taxon>
        <taxon>Rhodococcus</taxon>
    </lineage>
</organism>
<dbReference type="EC" id="6.3.5.3" evidence="1"/>
<dbReference type="EC" id="3.5.1.2" evidence="1"/>
<dbReference type="EMBL" id="CP000431">
    <property type="protein sequence ID" value="ABG96612.1"/>
    <property type="molecule type" value="Genomic_DNA"/>
</dbReference>
<dbReference type="RefSeq" id="WP_009477892.1">
    <property type="nucleotide sequence ID" value="NC_008268.1"/>
</dbReference>
<dbReference type="SMR" id="Q0S774"/>
<dbReference type="KEGG" id="rha:RHA1_ro04827"/>
<dbReference type="eggNOG" id="COG0047">
    <property type="taxonomic scope" value="Bacteria"/>
</dbReference>
<dbReference type="HOGENOM" id="CLU_001031_3_1_11"/>
<dbReference type="OrthoDB" id="9804441at2"/>
<dbReference type="UniPathway" id="UPA00074">
    <property type="reaction ID" value="UER00128"/>
</dbReference>
<dbReference type="Proteomes" id="UP000008710">
    <property type="component" value="Chromosome"/>
</dbReference>
<dbReference type="GO" id="GO:0005737">
    <property type="term" value="C:cytoplasm"/>
    <property type="evidence" value="ECO:0007669"/>
    <property type="project" value="UniProtKB-SubCell"/>
</dbReference>
<dbReference type="GO" id="GO:0005524">
    <property type="term" value="F:ATP binding"/>
    <property type="evidence" value="ECO:0007669"/>
    <property type="project" value="UniProtKB-KW"/>
</dbReference>
<dbReference type="GO" id="GO:0004359">
    <property type="term" value="F:glutaminase activity"/>
    <property type="evidence" value="ECO:0007669"/>
    <property type="project" value="UniProtKB-EC"/>
</dbReference>
<dbReference type="GO" id="GO:0004642">
    <property type="term" value="F:phosphoribosylformylglycinamidine synthase activity"/>
    <property type="evidence" value="ECO:0007669"/>
    <property type="project" value="UniProtKB-UniRule"/>
</dbReference>
<dbReference type="GO" id="GO:0006189">
    <property type="term" value="P:'de novo' IMP biosynthetic process"/>
    <property type="evidence" value="ECO:0007669"/>
    <property type="project" value="UniProtKB-UniRule"/>
</dbReference>
<dbReference type="CDD" id="cd01740">
    <property type="entry name" value="GATase1_FGAR_AT"/>
    <property type="match status" value="1"/>
</dbReference>
<dbReference type="FunFam" id="3.40.50.880:FF:000019">
    <property type="entry name" value="Phosphoribosylformylglycinamidine synthase subunit PurQ"/>
    <property type="match status" value="1"/>
</dbReference>
<dbReference type="Gene3D" id="3.40.50.880">
    <property type="match status" value="1"/>
</dbReference>
<dbReference type="HAMAP" id="MF_00421">
    <property type="entry name" value="PurQ"/>
    <property type="match status" value="1"/>
</dbReference>
<dbReference type="InterPro" id="IPR029062">
    <property type="entry name" value="Class_I_gatase-like"/>
</dbReference>
<dbReference type="InterPro" id="IPR010075">
    <property type="entry name" value="PRibForGlyAmidine_synth_PurQ"/>
</dbReference>
<dbReference type="NCBIfam" id="TIGR01737">
    <property type="entry name" value="FGAM_synth_I"/>
    <property type="match status" value="1"/>
</dbReference>
<dbReference type="NCBIfam" id="NF002957">
    <property type="entry name" value="PRK03619.1"/>
    <property type="match status" value="1"/>
</dbReference>
<dbReference type="PANTHER" id="PTHR47552">
    <property type="entry name" value="PHOSPHORIBOSYLFORMYLGLYCINAMIDINE SYNTHASE SUBUNIT PURQ"/>
    <property type="match status" value="1"/>
</dbReference>
<dbReference type="PANTHER" id="PTHR47552:SF1">
    <property type="entry name" value="PHOSPHORIBOSYLFORMYLGLYCINAMIDINE SYNTHASE SUBUNIT PURQ"/>
    <property type="match status" value="1"/>
</dbReference>
<dbReference type="Pfam" id="PF13507">
    <property type="entry name" value="GATase_5"/>
    <property type="match status" value="1"/>
</dbReference>
<dbReference type="PIRSF" id="PIRSF001586">
    <property type="entry name" value="FGAM_synth_I"/>
    <property type="match status" value="1"/>
</dbReference>
<dbReference type="SMART" id="SM01211">
    <property type="entry name" value="GATase_5"/>
    <property type="match status" value="1"/>
</dbReference>
<dbReference type="SUPFAM" id="SSF52317">
    <property type="entry name" value="Class I glutamine amidotransferase-like"/>
    <property type="match status" value="1"/>
</dbReference>
<dbReference type="PROSITE" id="PS51273">
    <property type="entry name" value="GATASE_TYPE_1"/>
    <property type="match status" value="1"/>
</dbReference>
<name>PURQ_RHOJR</name>
<comment type="function">
    <text evidence="1">Part of the phosphoribosylformylglycinamidine synthase complex involved in the purines biosynthetic pathway. Catalyzes the ATP-dependent conversion of formylglycinamide ribonucleotide (FGAR) and glutamine to yield formylglycinamidine ribonucleotide (FGAM) and glutamate. The FGAM synthase complex is composed of three subunits. PurQ produces an ammonia molecule by converting glutamine to glutamate. PurL transfers the ammonia molecule to FGAR to form FGAM in an ATP-dependent manner. PurS interacts with PurQ and PurL and is thought to assist in the transfer of the ammonia molecule from PurQ to PurL.</text>
</comment>
<comment type="catalytic activity">
    <reaction evidence="1">
        <text>N(2)-formyl-N(1)-(5-phospho-beta-D-ribosyl)glycinamide + L-glutamine + ATP + H2O = 2-formamido-N(1)-(5-O-phospho-beta-D-ribosyl)acetamidine + L-glutamate + ADP + phosphate + H(+)</text>
        <dbReference type="Rhea" id="RHEA:17129"/>
        <dbReference type="ChEBI" id="CHEBI:15377"/>
        <dbReference type="ChEBI" id="CHEBI:15378"/>
        <dbReference type="ChEBI" id="CHEBI:29985"/>
        <dbReference type="ChEBI" id="CHEBI:30616"/>
        <dbReference type="ChEBI" id="CHEBI:43474"/>
        <dbReference type="ChEBI" id="CHEBI:58359"/>
        <dbReference type="ChEBI" id="CHEBI:147286"/>
        <dbReference type="ChEBI" id="CHEBI:147287"/>
        <dbReference type="ChEBI" id="CHEBI:456216"/>
        <dbReference type="EC" id="6.3.5.3"/>
    </reaction>
</comment>
<comment type="catalytic activity">
    <reaction evidence="1">
        <text>L-glutamine + H2O = L-glutamate + NH4(+)</text>
        <dbReference type="Rhea" id="RHEA:15889"/>
        <dbReference type="ChEBI" id="CHEBI:15377"/>
        <dbReference type="ChEBI" id="CHEBI:28938"/>
        <dbReference type="ChEBI" id="CHEBI:29985"/>
        <dbReference type="ChEBI" id="CHEBI:58359"/>
        <dbReference type="EC" id="3.5.1.2"/>
    </reaction>
</comment>
<comment type="pathway">
    <text evidence="1">Purine metabolism; IMP biosynthesis via de novo pathway; 5-amino-1-(5-phospho-D-ribosyl)imidazole from N(2)-formyl-N(1)-(5-phospho-D-ribosyl)glycinamide: step 1/2.</text>
</comment>
<comment type="subunit">
    <text evidence="1">Part of the FGAM synthase complex composed of 1 PurL, 1 PurQ and 2 PurS subunits.</text>
</comment>
<comment type="subcellular location">
    <subcellularLocation>
        <location evidence="1">Cytoplasm</location>
    </subcellularLocation>
</comment>
<proteinExistence type="inferred from homology"/>
<evidence type="ECO:0000255" key="1">
    <source>
        <dbReference type="HAMAP-Rule" id="MF_00421"/>
    </source>
</evidence>
<sequence>MSARVGVITFPGTLDDVDAARAVTLAGGEAVSLWHGDADLKGVDAVIVPGGFSYGDYLRCGAIARFAPVMGKVVQAAQGGMPVLGICNGFQVLCEAGLLPGALTRNEGLHFICRDEWLKVEATSTAWTSRYESGAEILVPLKSGEGRYQASENVLDELEGEGRVVFRYVGDNPNGSQRGIAGISSANGRVVGLMPHPEHATEALTGPSDDGLGMFYSVLDSVISA</sequence>
<accession>Q0S774</accession>
<feature type="chain" id="PRO_0000252723" description="Phosphoribosylformylglycinamidine synthase subunit PurQ">
    <location>
        <begin position="1"/>
        <end position="225"/>
    </location>
</feature>
<feature type="domain" description="Glutamine amidotransferase type-1" evidence="1">
    <location>
        <begin position="4"/>
        <end position="225"/>
    </location>
</feature>
<feature type="active site" description="Nucleophile" evidence="1">
    <location>
        <position position="87"/>
    </location>
</feature>
<feature type="active site" evidence="1">
    <location>
        <position position="196"/>
    </location>
</feature>
<feature type="active site" evidence="1">
    <location>
        <position position="198"/>
    </location>
</feature>
<reference key="1">
    <citation type="journal article" date="2006" name="Proc. Natl. Acad. Sci. U.S.A.">
        <title>The complete genome of Rhodococcus sp. RHA1 provides insights into a catabolic powerhouse.</title>
        <authorList>
            <person name="McLeod M.P."/>
            <person name="Warren R.L."/>
            <person name="Hsiao W.W.L."/>
            <person name="Araki N."/>
            <person name="Myhre M."/>
            <person name="Fernandes C."/>
            <person name="Miyazawa D."/>
            <person name="Wong W."/>
            <person name="Lillquist A.L."/>
            <person name="Wang D."/>
            <person name="Dosanjh M."/>
            <person name="Hara H."/>
            <person name="Petrescu A."/>
            <person name="Morin R.D."/>
            <person name="Yang G."/>
            <person name="Stott J.M."/>
            <person name="Schein J.E."/>
            <person name="Shin H."/>
            <person name="Smailus D."/>
            <person name="Siddiqui A.S."/>
            <person name="Marra M.A."/>
            <person name="Jones S.J.M."/>
            <person name="Holt R."/>
            <person name="Brinkman F.S.L."/>
            <person name="Miyauchi K."/>
            <person name="Fukuda M."/>
            <person name="Davies J.E."/>
            <person name="Mohn W.W."/>
            <person name="Eltis L.D."/>
        </authorList>
    </citation>
    <scope>NUCLEOTIDE SEQUENCE [LARGE SCALE GENOMIC DNA]</scope>
    <source>
        <strain>RHA1</strain>
    </source>
</reference>
<protein>
    <recommendedName>
        <fullName evidence="1">Phosphoribosylformylglycinamidine synthase subunit PurQ</fullName>
        <shortName evidence="1">FGAM synthase</shortName>
        <ecNumber evidence="1">6.3.5.3</ecNumber>
    </recommendedName>
    <alternativeName>
        <fullName evidence="1">Formylglycinamide ribonucleotide amidotransferase subunit I</fullName>
        <shortName evidence="1">FGAR amidotransferase I</shortName>
        <shortName evidence="1">FGAR-AT I</shortName>
    </alternativeName>
    <alternativeName>
        <fullName evidence="1">Glutaminase PurQ</fullName>
        <ecNumber evidence="1">3.5.1.2</ecNumber>
    </alternativeName>
    <alternativeName>
        <fullName evidence="1">Phosphoribosylformylglycinamidine synthase subunit I</fullName>
    </alternativeName>
</protein>
<keyword id="KW-0067">ATP-binding</keyword>
<keyword id="KW-0963">Cytoplasm</keyword>
<keyword id="KW-0315">Glutamine amidotransferase</keyword>
<keyword id="KW-0378">Hydrolase</keyword>
<keyword id="KW-0436">Ligase</keyword>
<keyword id="KW-0547">Nucleotide-binding</keyword>
<keyword id="KW-0658">Purine biosynthesis</keyword>
<gene>
    <name evidence="1" type="primary">purQ</name>
    <name type="ordered locus">RHA1_ro04827</name>
</gene>